<keyword id="KW-1185">Reference proteome</keyword>
<dbReference type="EMBL" id="AE016853">
    <property type="protein sequence ID" value="AAO57869.1"/>
    <property type="molecule type" value="Genomic_DNA"/>
</dbReference>
<dbReference type="RefSeq" id="NP_794174.1">
    <property type="nucleotide sequence ID" value="NC_004578.1"/>
</dbReference>
<dbReference type="RefSeq" id="WP_005766552.1">
    <property type="nucleotide sequence ID" value="NC_004578.1"/>
</dbReference>
<dbReference type="SMR" id="Q87WX3"/>
<dbReference type="STRING" id="223283.PSPTO_4420"/>
<dbReference type="GeneID" id="1186101"/>
<dbReference type="KEGG" id="pst:PSPTO_4420"/>
<dbReference type="PATRIC" id="fig|223283.9.peg.4535"/>
<dbReference type="eggNOG" id="COG0792">
    <property type="taxonomic scope" value="Bacteria"/>
</dbReference>
<dbReference type="HOGENOM" id="CLU_115353_1_0_6"/>
<dbReference type="OrthoDB" id="9794876at2"/>
<dbReference type="PhylomeDB" id="Q87WX3"/>
<dbReference type="Proteomes" id="UP000002515">
    <property type="component" value="Chromosome"/>
</dbReference>
<dbReference type="GO" id="GO:0003676">
    <property type="term" value="F:nucleic acid binding"/>
    <property type="evidence" value="ECO:0007669"/>
    <property type="project" value="InterPro"/>
</dbReference>
<dbReference type="CDD" id="cd20736">
    <property type="entry name" value="PoNe_Nuclease"/>
    <property type="match status" value="1"/>
</dbReference>
<dbReference type="Gene3D" id="3.40.1350.10">
    <property type="match status" value="1"/>
</dbReference>
<dbReference type="HAMAP" id="MF_00048">
    <property type="entry name" value="UPF0102"/>
    <property type="match status" value="1"/>
</dbReference>
<dbReference type="InterPro" id="IPR011335">
    <property type="entry name" value="Restrct_endonuc-II-like"/>
</dbReference>
<dbReference type="InterPro" id="IPR011856">
    <property type="entry name" value="tRNA_endonuc-like_dom_sf"/>
</dbReference>
<dbReference type="InterPro" id="IPR003509">
    <property type="entry name" value="UPF0102_YraN-like"/>
</dbReference>
<dbReference type="NCBIfam" id="NF009150">
    <property type="entry name" value="PRK12497.1-3"/>
    <property type="match status" value="1"/>
</dbReference>
<dbReference type="NCBIfam" id="TIGR00252">
    <property type="entry name" value="YraN family protein"/>
    <property type="match status" value="1"/>
</dbReference>
<dbReference type="PANTHER" id="PTHR34039">
    <property type="entry name" value="UPF0102 PROTEIN YRAN"/>
    <property type="match status" value="1"/>
</dbReference>
<dbReference type="PANTHER" id="PTHR34039:SF1">
    <property type="entry name" value="UPF0102 PROTEIN YRAN"/>
    <property type="match status" value="1"/>
</dbReference>
<dbReference type="Pfam" id="PF02021">
    <property type="entry name" value="UPF0102"/>
    <property type="match status" value="1"/>
</dbReference>
<dbReference type="SUPFAM" id="SSF52980">
    <property type="entry name" value="Restriction endonuclease-like"/>
    <property type="match status" value="1"/>
</dbReference>
<feature type="chain" id="PRO_0000167372" description="UPF0102 protein PSPTO_4420">
    <location>
        <begin position="1"/>
        <end position="128"/>
    </location>
</feature>
<protein>
    <recommendedName>
        <fullName evidence="1">UPF0102 protein PSPTO_4420</fullName>
    </recommendedName>
</protein>
<comment type="similarity">
    <text evidence="1">Belongs to the UPF0102 family.</text>
</comment>
<proteinExistence type="inferred from homology"/>
<name>Y4420_PSESM</name>
<organism>
    <name type="scientific">Pseudomonas syringae pv. tomato (strain ATCC BAA-871 / DC3000)</name>
    <dbReference type="NCBI Taxonomy" id="223283"/>
    <lineage>
        <taxon>Bacteria</taxon>
        <taxon>Pseudomonadati</taxon>
        <taxon>Pseudomonadota</taxon>
        <taxon>Gammaproteobacteria</taxon>
        <taxon>Pseudomonadales</taxon>
        <taxon>Pseudomonadaceae</taxon>
        <taxon>Pseudomonas</taxon>
    </lineage>
</organism>
<sequence length="128" mass="14457">MIPRSTRQQAGREAEAFALQFLQQQGLRLIEQNWLCKRGELDLVMLDGDTVVFVEVRYRRHCGWGGAVESVDFRKQGKLVTAAQLFLQQVSCWADYPCRFDVIAIEGSPGSFDGSTVPLNWIKSAFDS</sequence>
<evidence type="ECO:0000255" key="1">
    <source>
        <dbReference type="HAMAP-Rule" id="MF_00048"/>
    </source>
</evidence>
<reference key="1">
    <citation type="journal article" date="2003" name="Proc. Natl. Acad. Sci. U.S.A.">
        <title>The complete genome sequence of the Arabidopsis and tomato pathogen Pseudomonas syringae pv. tomato DC3000.</title>
        <authorList>
            <person name="Buell C.R."/>
            <person name="Joardar V."/>
            <person name="Lindeberg M."/>
            <person name="Selengut J."/>
            <person name="Paulsen I.T."/>
            <person name="Gwinn M.L."/>
            <person name="Dodson R.J."/>
            <person name="DeBoy R.T."/>
            <person name="Durkin A.S."/>
            <person name="Kolonay J.F."/>
            <person name="Madupu R."/>
            <person name="Daugherty S.C."/>
            <person name="Brinkac L.M."/>
            <person name="Beanan M.J."/>
            <person name="Haft D.H."/>
            <person name="Nelson W.C."/>
            <person name="Davidsen T.M."/>
            <person name="Zafar N."/>
            <person name="Zhou L."/>
            <person name="Liu J."/>
            <person name="Yuan Q."/>
            <person name="Khouri H.M."/>
            <person name="Fedorova N.B."/>
            <person name="Tran B."/>
            <person name="Russell D."/>
            <person name="Berry K.J."/>
            <person name="Utterback T.R."/>
            <person name="Van Aken S.E."/>
            <person name="Feldblyum T.V."/>
            <person name="D'Ascenzo M."/>
            <person name="Deng W.-L."/>
            <person name="Ramos A.R."/>
            <person name="Alfano J.R."/>
            <person name="Cartinhour S."/>
            <person name="Chatterjee A.K."/>
            <person name="Delaney T.P."/>
            <person name="Lazarowitz S.G."/>
            <person name="Martin G.B."/>
            <person name="Schneider D.J."/>
            <person name="Tang X."/>
            <person name="Bender C.L."/>
            <person name="White O."/>
            <person name="Fraser C.M."/>
            <person name="Collmer A."/>
        </authorList>
    </citation>
    <scope>NUCLEOTIDE SEQUENCE [LARGE SCALE GENOMIC DNA]</scope>
    <source>
        <strain>ATCC BAA-871 / DC3000</strain>
    </source>
</reference>
<gene>
    <name type="ordered locus">PSPTO_4420</name>
</gene>
<accession>Q87WX3</accession>